<proteinExistence type="inferred from homology"/>
<feature type="chain" id="PRO_1000139558" description="CTP synthase">
    <location>
        <begin position="1"/>
        <end position="545"/>
    </location>
</feature>
<feature type="domain" description="Glutamine amidotransferase type-1" evidence="1">
    <location>
        <begin position="291"/>
        <end position="542"/>
    </location>
</feature>
<feature type="region of interest" description="Amidoligase domain" evidence="1">
    <location>
        <begin position="1"/>
        <end position="266"/>
    </location>
</feature>
<feature type="active site" description="Nucleophile; for glutamine hydrolysis" evidence="1">
    <location>
        <position position="379"/>
    </location>
</feature>
<feature type="active site" evidence="1">
    <location>
        <position position="515"/>
    </location>
</feature>
<feature type="active site" evidence="1">
    <location>
        <position position="517"/>
    </location>
</feature>
<feature type="binding site" evidence="1">
    <location>
        <position position="14"/>
    </location>
    <ligand>
        <name>CTP</name>
        <dbReference type="ChEBI" id="CHEBI:37563"/>
        <note>allosteric inhibitor</note>
    </ligand>
</feature>
<feature type="binding site" evidence="1">
    <location>
        <position position="14"/>
    </location>
    <ligand>
        <name>UTP</name>
        <dbReference type="ChEBI" id="CHEBI:46398"/>
    </ligand>
</feature>
<feature type="binding site" evidence="1">
    <location>
        <begin position="15"/>
        <end position="20"/>
    </location>
    <ligand>
        <name>ATP</name>
        <dbReference type="ChEBI" id="CHEBI:30616"/>
    </ligand>
</feature>
<feature type="binding site" evidence="1">
    <location>
        <position position="72"/>
    </location>
    <ligand>
        <name>ATP</name>
        <dbReference type="ChEBI" id="CHEBI:30616"/>
    </ligand>
</feature>
<feature type="binding site" evidence="1">
    <location>
        <position position="72"/>
    </location>
    <ligand>
        <name>Mg(2+)</name>
        <dbReference type="ChEBI" id="CHEBI:18420"/>
    </ligand>
</feature>
<feature type="binding site" evidence="1">
    <location>
        <position position="140"/>
    </location>
    <ligand>
        <name>Mg(2+)</name>
        <dbReference type="ChEBI" id="CHEBI:18420"/>
    </ligand>
</feature>
<feature type="binding site" evidence="1">
    <location>
        <begin position="147"/>
        <end position="149"/>
    </location>
    <ligand>
        <name>CTP</name>
        <dbReference type="ChEBI" id="CHEBI:37563"/>
        <note>allosteric inhibitor</note>
    </ligand>
</feature>
<feature type="binding site" evidence="1">
    <location>
        <begin position="187"/>
        <end position="192"/>
    </location>
    <ligand>
        <name>CTP</name>
        <dbReference type="ChEBI" id="CHEBI:37563"/>
        <note>allosteric inhibitor</note>
    </ligand>
</feature>
<feature type="binding site" evidence="1">
    <location>
        <begin position="187"/>
        <end position="192"/>
    </location>
    <ligand>
        <name>UTP</name>
        <dbReference type="ChEBI" id="CHEBI:46398"/>
    </ligand>
</feature>
<feature type="binding site" evidence="1">
    <location>
        <position position="223"/>
    </location>
    <ligand>
        <name>CTP</name>
        <dbReference type="ChEBI" id="CHEBI:37563"/>
        <note>allosteric inhibitor</note>
    </ligand>
</feature>
<feature type="binding site" evidence="1">
    <location>
        <position position="223"/>
    </location>
    <ligand>
        <name>UTP</name>
        <dbReference type="ChEBI" id="CHEBI:46398"/>
    </ligand>
</feature>
<feature type="binding site" evidence="1">
    <location>
        <begin position="239"/>
        <end position="241"/>
    </location>
    <ligand>
        <name>ATP</name>
        <dbReference type="ChEBI" id="CHEBI:30616"/>
    </ligand>
</feature>
<feature type="binding site" evidence="1">
    <location>
        <position position="352"/>
    </location>
    <ligand>
        <name>L-glutamine</name>
        <dbReference type="ChEBI" id="CHEBI:58359"/>
    </ligand>
</feature>
<feature type="binding site" evidence="1">
    <location>
        <begin position="380"/>
        <end position="383"/>
    </location>
    <ligand>
        <name>L-glutamine</name>
        <dbReference type="ChEBI" id="CHEBI:58359"/>
    </ligand>
</feature>
<feature type="binding site" evidence="1">
    <location>
        <position position="403"/>
    </location>
    <ligand>
        <name>L-glutamine</name>
        <dbReference type="ChEBI" id="CHEBI:58359"/>
    </ligand>
</feature>
<feature type="binding site" evidence="1">
    <location>
        <position position="470"/>
    </location>
    <ligand>
        <name>L-glutamine</name>
        <dbReference type="ChEBI" id="CHEBI:58359"/>
    </ligand>
</feature>
<reference key="1">
    <citation type="journal article" date="2011" name="J. Bacteriol.">
        <title>Comparative genomics of 28 Salmonella enterica isolates: evidence for CRISPR-mediated adaptive sublineage evolution.</title>
        <authorList>
            <person name="Fricke W.F."/>
            <person name="Mammel M.K."/>
            <person name="McDermott P.F."/>
            <person name="Tartera C."/>
            <person name="White D.G."/>
            <person name="Leclerc J.E."/>
            <person name="Ravel J."/>
            <person name="Cebula T.A."/>
        </authorList>
    </citation>
    <scope>NUCLEOTIDE SEQUENCE [LARGE SCALE GENOMIC DNA]</scope>
    <source>
        <strain>CT_02021853</strain>
    </source>
</reference>
<accession>B5FTV0</accession>
<sequence>MTTNYIFVTGGVVSSLGKGIAAASLAAILEARGLNVTIMKLDPYINVDPGTMSPIQHGEVFVTEDGAETDLDLGHYERFIRTKMSRRNNFTTGRIYSDVLRKERRGDYLGATVQVIPHITNAIKERVLEGGEGHDVVLVEIGGTVGDIESLPFLEAIRQLAVDIGREHALFMHLTLVPYLAAAGEVKTKPTQHSVKELLSIGIQPDILICRSDRAVPANERAKIALFCNVPEKAVISMKDVDSIYKIPGLLKSQGLDDYICKRFSLNCPEANLSEWEQVIYEEANPAGEVTIGMVGKYIELPDAYKSVIEALKHGGLKNRVTVNIKLIDSQDVETRGVEILKDLDAILIPGGFGYRGVEGKIATARYARENNIPYLGICLGMQVALIEFARNVAGMDNANSTEFVPDCKYPVVALITEWRDEDGNVEVRSEKSDLGGTMRLGAQQCQLSDDSLVRQLYGASTIVERHRHRYEVNNMLLKQIEAAGLRVAGRSGDDQLVEIIEVPNHPWFVACQFHPEFTSTPRDGHPLFAGFVKAANEHQKRQAK</sequence>
<gene>
    <name evidence="1" type="primary">pyrG</name>
    <name type="ordered locus">SeD_A3267</name>
</gene>
<evidence type="ECO:0000255" key="1">
    <source>
        <dbReference type="HAMAP-Rule" id="MF_01227"/>
    </source>
</evidence>
<name>PYRG_SALDC</name>
<keyword id="KW-0067">ATP-binding</keyword>
<keyword id="KW-0315">Glutamine amidotransferase</keyword>
<keyword id="KW-0436">Ligase</keyword>
<keyword id="KW-0460">Magnesium</keyword>
<keyword id="KW-0479">Metal-binding</keyword>
<keyword id="KW-0547">Nucleotide-binding</keyword>
<keyword id="KW-0665">Pyrimidine biosynthesis</keyword>
<dbReference type="EC" id="6.3.4.2" evidence="1"/>
<dbReference type="EMBL" id="CP001144">
    <property type="protein sequence ID" value="ACH75357.1"/>
    <property type="molecule type" value="Genomic_DNA"/>
</dbReference>
<dbReference type="RefSeq" id="WP_000210863.1">
    <property type="nucleotide sequence ID" value="NC_011205.1"/>
</dbReference>
<dbReference type="SMR" id="B5FTV0"/>
<dbReference type="MEROPS" id="C26.964"/>
<dbReference type="KEGG" id="sed:SeD_A3267"/>
<dbReference type="HOGENOM" id="CLU_011675_5_0_6"/>
<dbReference type="UniPathway" id="UPA00159">
    <property type="reaction ID" value="UER00277"/>
</dbReference>
<dbReference type="Proteomes" id="UP000008322">
    <property type="component" value="Chromosome"/>
</dbReference>
<dbReference type="GO" id="GO:0005829">
    <property type="term" value="C:cytosol"/>
    <property type="evidence" value="ECO:0007669"/>
    <property type="project" value="TreeGrafter"/>
</dbReference>
<dbReference type="GO" id="GO:0005524">
    <property type="term" value="F:ATP binding"/>
    <property type="evidence" value="ECO:0007669"/>
    <property type="project" value="UniProtKB-KW"/>
</dbReference>
<dbReference type="GO" id="GO:0003883">
    <property type="term" value="F:CTP synthase activity"/>
    <property type="evidence" value="ECO:0007669"/>
    <property type="project" value="UniProtKB-UniRule"/>
</dbReference>
<dbReference type="GO" id="GO:0004359">
    <property type="term" value="F:glutaminase activity"/>
    <property type="evidence" value="ECO:0007669"/>
    <property type="project" value="RHEA"/>
</dbReference>
<dbReference type="GO" id="GO:0042802">
    <property type="term" value="F:identical protein binding"/>
    <property type="evidence" value="ECO:0007669"/>
    <property type="project" value="TreeGrafter"/>
</dbReference>
<dbReference type="GO" id="GO:0046872">
    <property type="term" value="F:metal ion binding"/>
    <property type="evidence" value="ECO:0007669"/>
    <property type="project" value="UniProtKB-KW"/>
</dbReference>
<dbReference type="GO" id="GO:0044210">
    <property type="term" value="P:'de novo' CTP biosynthetic process"/>
    <property type="evidence" value="ECO:0007669"/>
    <property type="project" value="UniProtKB-UniRule"/>
</dbReference>
<dbReference type="GO" id="GO:0019856">
    <property type="term" value="P:pyrimidine nucleobase biosynthetic process"/>
    <property type="evidence" value="ECO:0007669"/>
    <property type="project" value="TreeGrafter"/>
</dbReference>
<dbReference type="CDD" id="cd03113">
    <property type="entry name" value="CTPS_N"/>
    <property type="match status" value="1"/>
</dbReference>
<dbReference type="CDD" id="cd01746">
    <property type="entry name" value="GATase1_CTP_Synthase"/>
    <property type="match status" value="1"/>
</dbReference>
<dbReference type="FunFam" id="3.40.50.300:FF:000009">
    <property type="entry name" value="CTP synthase"/>
    <property type="match status" value="1"/>
</dbReference>
<dbReference type="FunFam" id="3.40.50.880:FF:000002">
    <property type="entry name" value="CTP synthase"/>
    <property type="match status" value="1"/>
</dbReference>
<dbReference type="Gene3D" id="3.40.50.880">
    <property type="match status" value="1"/>
</dbReference>
<dbReference type="Gene3D" id="3.40.50.300">
    <property type="entry name" value="P-loop containing nucleotide triphosphate hydrolases"/>
    <property type="match status" value="1"/>
</dbReference>
<dbReference type="HAMAP" id="MF_01227">
    <property type="entry name" value="PyrG"/>
    <property type="match status" value="1"/>
</dbReference>
<dbReference type="InterPro" id="IPR029062">
    <property type="entry name" value="Class_I_gatase-like"/>
</dbReference>
<dbReference type="InterPro" id="IPR004468">
    <property type="entry name" value="CTP_synthase"/>
</dbReference>
<dbReference type="InterPro" id="IPR017456">
    <property type="entry name" value="CTP_synthase_N"/>
</dbReference>
<dbReference type="InterPro" id="IPR017926">
    <property type="entry name" value="GATASE"/>
</dbReference>
<dbReference type="InterPro" id="IPR033828">
    <property type="entry name" value="GATase1_CTP_Synthase"/>
</dbReference>
<dbReference type="InterPro" id="IPR027417">
    <property type="entry name" value="P-loop_NTPase"/>
</dbReference>
<dbReference type="NCBIfam" id="NF003792">
    <property type="entry name" value="PRK05380.1"/>
    <property type="match status" value="1"/>
</dbReference>
<dbReference type="NCBIfam" id="TIGR00337">
    <property type="entry name" value="PyrG"/>
    <property type="match status" value="1"/>
</dbReference>
<dbReference type="PANTHER" id="PTHR11550">
    <property type="entry name" value="CTP SYNTHASE"/>
    <property type="match status" value="1"/>
</dbReference>
<dbReference type="PANTHER" id="PTHR11550:SF0">
    <property type="entry name" value="CTP SYNTHASE-RELATED"/>
    <property type="match status" value="1"/>
</dbReference>
<dbReference type="Pfam" id="PF06418">
    <property type="entry name" value="CTP_synth_N"/>
    <property type="match status" value="1"/>
</dbReference>
<dbReference type="Pfam" id="PF00117">
    <property type="entry name" value="GATase"/>
    <property type="match status" value="1"/>
</dbReference>
<dbReference type="SUPFAM" id="SSF52317">
    <property type="entry name" value="Class I glutamine amidotransferase-like"/>
    <property type="match status" value="1"/>
</dbReference>
<dbReference type="SUPFAM" id="SSF52540">
    <property type="entry name" value="P-loop containing nucleoside triphosphate hydrolases"/>
    <property type="match status" value="1"/>
</dbReference>
<dbReference type="PROSITE" id="PS51273">
    <property type="entry name" value="GATASE_TYPE_1"/>
    <property type="match status" value="1"/>
</dbReference>
<organism>
    <name type="scientific">Salmonella dublin (strain CT_02021853)</name>
    <dbReference type="NCBI Taxonomy" id="439851"/>
    <lineage>
        <taxon>Bacteria</taxon>
        <taxon>Pseudomonadati</taxon>
        <taxon>Pseudomonadota</taxon>
        <taxon>Gammaproteobacteria</taxon>
        <taxon>Enterobacterales</taxon>
        <taxon>Enterobacteriaceae</taxon>
        <taxon>Salmonella</taxon>
    </lineage>
</organism>
<protein>
    <recommendedName>
        <fullName evidence="1">CTP synthase</fullName>
        <ecNumber evidence="1">6.3.4.2</ecNumber>
    </recommendedName>
    <alternativeName>
        <fullName evidence="1">Cytidine 5'-triphosphate synthase</fullName>
    </alternativeName>
    <alternativeName>
        <fullName evidence="1">Cytidine triphosphate synthetase</fullName>
        <shortName evidence="1">CTP synthetase</shortName>
        <shortName evidence="1">CTPS</shortName>
    </alternativeName>
    <alternativeName>
        <fullName evidence="1">UTP--ammonia ligase</fullName>
    </alternativeName>
</protein>
<comment type="function">
    <text evidence="1">Catalyzes the ATP-dependent amination of UTP to CTP with either L-glutamine or ammonia as the source of nitrogen. Regulates intracellular CTP levels through interactions with the four ribonucleotide triphosphates.</text>
</comment>
<comment type="catalytic activity">
    <reaction evidence="1">
        <text>UTP + L-glutamine + ATP + H2O = CTP + L-glutamate + ADP + phosphate + 2 H(+)</text>
        <dbReference type="Rhea" id="RHEA:26426"/>
        <dbReference type="ChEBI" id="CHEBI:15377"/>
        <dbReference type="ChEBI" id="CHEBI:15378"/>
        <dbReference type="ChEBI" id="CHEBI:29985"/>
        <dbReference type="ChEBI" id="CHEBI:30616"/>
        <dbReference type="ChEBI" id="CHEBI:37563"/>
        <dbReference type="ChEBI" id="CHEBI:43474"/>
        <dbReference type="ChEBI" id="CHEBI:46398"/>
        <dbReference type="ChEBI" id="CHEBI:58359"/>
        <dbReference type="ChEBI" id="CHEBI:456216"/>
        <dbReference type="EC" id="6.3.4.2"/>
    </reaction>
</comment>
<comment type="catalytic activity">
    <reaction evidence="1">
        <text>L-glutamine + H2O = L-glutamate + NH4(+)</text>
        <dbReference type="Rhea" id="RHEA:15889"/>
        <dbReference type="ChEBI" id="CHEBI:15377"/>
        <dbReference type="ChEBI" id="CHEBI:28938"/>
        <dbReference type="ChEBI" id="CHEBI:29985"/>
        <dbReference type="ChEBI" id="CHEBI:58359"/>
    </reaction>
</comment>
<comment type="catalytic activity">
    <reaction evidence="1">
        <text>UTP + NH4(+) + ATP = CTP + ADP + phosphate + 2 H(+)</text>
        <dbReference type="Rhea" id="RHEA:16597"/>
        <dbReference type="ChEBI" id="CHEBI:15378"/>
        <dbReference type="ChEBI" id="CHEBI:28938"/>
        <dbReference type="ChEBI" id="CHEBI:30616"/>
        <dbReference type="ChEBI" id="CHEBI:37563"/>
        <dbReference type="ChEBI" id="CHEBI:43474"/>
        <dbReference type="ChEBI" id="CHEBI:46398"/>
        <dbReference type="ChEBI" id="CHEBI:456216"/>
    </reaction>
</comment>
<comment type="activity regulation">
    <text evidence="1">Allosterically activated by GTP, when glutamine is the substrate; GTP has no effect on the reaction when ammonia is the substrate. The allosteric effector GTP functions by stabilizing the protein conformation that binds the tetrahedral intermediate(s) formed during glutamine hydrolysis. Inhibited by the product CTP, via allosteric rather than competitive inhibition.</text>
</comment>
<comment type="pathway">
    <text evidence="1">Pyrimidine metabolism; CTP biosynthesis via de novo pathway; CTP from UDP: step 2/2.</text>
</comment>
<comment type="subunit">
    <text evidence="1">Homotetramer.</text>
</comment>
<comment type="miscellaneous">
    <text evidence="1">CTPSs have evolved a hybrid strategy for distinguishing between UTP and CTP. The overlapping regions of the product feedback inhibitory and substrate sites recognize a common feature in both compounds, the triphosphate moiety. To differentiate isosteric substrate and product pyrimidine rings, an additional pocket far from the expected kinase/ligase catalytic site, specifically recognizes the cytosine and ribose portions of the product inhibitor.</text>
</comment>
<comment type="similarity">
    <text evidence="1">Belongs to the CTP synthase family.</text>
</comment>